<protein>
    <recommendedName>
        <fullName evidence="1">4-deoxy-L-threo-5-hexosulose-uronate ketol-isomerase</fullName>
        <ecNumber evidence="1">5.3.1.17</ecNumber>
    </recommendedName>
    <alternativeName>
        <fullName evidence="1">5-keto-4-deoxyuronate isomerase</fullName>
    </alternativeName>
    <alternativeName>
        <fullName evidence="1">DKI isomerase</fullName>
    </alternativeName>
</protein>
<evidence type="ECO:0000255" key="1">
    <source>
        <dbReference type="HAMAP-Rule" id="MF_00687"/>
    </source>
</evidence>
<organism>
    <name type="scientific">Kineococcus radiotolerans (strain ATCC BAA-149 / DSM 14245 / SRS30216)</name>
    <dbReference type="NCBI Taxonomy" id="266940"/>
    <lineage>
        <taxon>Bacteria</taxon>
        <taxon>Bacillati</taxon>
        <taxon>Actinomycetota</taxon>
        <taxon>Actinomycetes</taxon>
        <taxon>Kineosporiales</taxon>
        <taxon>Kineosporiaceae</taxon>
        <taxon>Kineococcus</taxon>
    </lineage>
</organism>
<dbReference type="EC" id="5.3.1.17" evidence="1"/>
<dbReference type="EMBL" id="CP000750">
    <property type="protein sequence ID" value="ABS01688.1"/>
    <property type="molecule type" value="Genomic_DNA"/>
</dbReference>
<dbReference type="RefSeq" id="WP_012085489.1">
    <property type="nucleotide sequence ID" value="NC_009664.2"/>
</dbReference>
<dbReference type="SMR" id="A6W4E9"/>
<dbReference type="STRING" id="266940.Krad_0197"/>
<dbReference type="KEGG" id="kra:Krad_0197"/>
<dbReference type="eggNOG" id="COG3717">
    <property type="taxonomic scope" value="Bacteria"/>
</dbReference>
<dbReference type="HOGENOM" id="CLU_062609_0_0_11"/>
<dbReference type="OrthoDB" id="9770644at2"/>
<dbReference type="UniPathway" id="UPA00545">
    <property type="reaction ID" value="UER00826"/>
</dbReference>
<dbReference type="Proteomes" id="UP000001116">
    <property type="component" value="Chromosome"/>
</dbReference>
<dbReference type="GO" id="GO:0008697">
    <property type="term" value="F:4-deoxy-L-threo-5-hexosulose-uronate ketol-isomerase activity"/>
    <property type="evidence" value="ECO:0007669"/>
    <property type="project" value="UniProtKB-UniRule"/>
</dbReference>
<dbReference type="GO" id="GO:0008270">
    <property type="term" value="F:zinc ion binding"/>
    <property type="evidence" value="ECO:0007669"/>
    <property type="project" value="UniProtKB-UniRule"/>
</dbReference>
<dbReference type="GO" id="GO:0019698">
    <property type="term" value="P:D-galacturonate catabolic process"/>
    <property type="evidence" value="ECO:0007669"/>
    <property type="project" value="TreeGrafter"/>
</dbReference>
<dbReference type="GO" id="GO:0042840">
    <property type="term" value="P:D-glucuronate catabolic process"/>
    <property type="evidence" value="ECO:0007669"/>
    <property type="project" value="TreeGrafter"/>
</dbReference>
<dbReference type="GO" id="GO:0045490">
    <property type="term" value="P:pectin catabolic process"/>
    <property type="evidence" value="ECO:0007669"/>
    <property type="project" value="UniProtKB-UniRule"/>
</dbReference>
<dbReference type="CDD" id="cd20491">
    <property type="entry name" value="cupin_KduI_C"/>
    <property type="match status" value="1"/>
</dbReference>
<dbReference type="CDD" id="cd20294">
    <property type="entry name" value="cupin_KduI_N"/>
    <property type="match status" value="1"/>
</dbReference>
<dbReference type="Gene3D" id="2.60.120.10">
    <property type="entry name" value="Jelly Rolls"/>
    <property type="match status" value="1"/>
</dbReference>
<dbReference type="Gene3D" id="2.60.120.520">
    <property type="entry name" value="pectin degrading enzyme 5-keto 4- deoxyuronate isomerase, domain 1"/>
    <property type="match status" value="1"/>
</dbReference>
<dbReference type="HAMAP" id="MF_00687">
    <property type="entry name" value="KduI"/>
    <property type="match status" value="1"/>
</dbReference>
<dbReference type="InterPro" id="IPR007045">
    <property type="entry name" value="KduI"/>
</dbReference>
<dbReference type="InterPro" id="IPR021120">
    <property type="entry name" value="KduI/IolB_isomerase"/>
</dbReference>
<dbReference type="InterPro" id="IPR027449">
    <property type="entry name" value="KduI_N"/>
</dbReference>
<dbReference type="InterPro" id="IPR014710">
    <property type="entry name" value="RmlC-like_jellyroll"/>
</dbReference>
<dbReference type="InterPro" id="IPR011051">
    <property type="entry name" value="RmlC_Cupin_sf"/>
</dbReference>
<dbReference type="NCBIfam" id="NF002091">
    <property type="entry name" value="PRK00924.1"/>
    <property type="match status" value="1"/>
</dbReference>
<dbReference type="PANTHER" id="PTHR38461">
    <property type="entry name" value="4-DEOXY-L-THREO-5-HEXOSULOSE-URONATE KETOL-ISOMERASE"/>
    <property type="match status" value="1"/>
</dbReference>
<dbReference type="PANTHER" id="PTHR38461:SF1">
    <property type="entry name" value="4-DEOXY-L-THREO-5-HEXOSULOSE-URONATE KETOL-ISOMERASE"/>
    <property type="match status" value="1"/>
</dbReference>
<dbReference type="Pfam" id="PF04962">
    <property type="entry name" value="KduI"/>
    <property type="match status" value="1"/>
</dbReference>
<dbReference type="PIRSF" id="PIRSF006625">
    <property type="entry name" value="KduI"/>
    <property type="match status" value="1"/>
</dbReference>
<dbReference type="SUPFAM" id="SSF51182">
    <property type="entry name" value="RmlC-like cupins"/>
    <property type="match status" value="1"/>
</dbReference>
<sequence>MEQRYATSPEQVPGMDTAELRRRYLVEDLFAEGEVHAVYTHHDRVVLAGIVPTGDALDLPTFPEIASTTFFEHREAGIVNVGGPGTITVDGETHDLAHGSCLYVGRGADGVSFRSADPAGEAGPARFYLFSAPAHTAHPTTLVEAGGGTVRELGDQLTANRRTLNQYVHENGVKSCQVVMGVTTLHPGSTWNTMPAHTHDRRTEVYLYFGLPAGDRVVHLLGQPAETRHLLVADGQAVVSPSWSIHSGVGTAAYSFVWAMAGENQAFDDMDGVPVAELR</sequence>
<keyword id="KW-0413">Isomerase</keyword>
<keyword id="KW-0479">Metal-binding</keyword>
<keyword id="KW-1185">Reference proteome</keyword>
<keyword id="KW-0862">Zinc</keyword>
<proteinExistence type="inferred from homology"/>
<name>KDUI_KINRD</name>
<gene>
    <name evidence="1" type="primary">kduI</name>
    <name type="ordered locus">Krad_0197</name>
</gene>
<feature type="chain" id="PRO_1000083090" description="4-deoxy-L-threo-5-hexosulose-uronate ketol-isomerase">
    <location>
        <begin position="1"/>
        <end position="279"/>
    </location>
</feature>
<feature type="binding site" evidence="1">
    <location>
        <position position="197"/>
    </location>
    <ligand>
        <name>Zn(2+)</name>
        <dbReference type="ChEBI" id="CHEBI:29105"/>
    </ligand>
</feature>
<feature type="binding site" evidence="1">
    <location>
        <position position="199"/>
    </location>
    <ligand>
        <name>Zn(2+)</name>
        <dbReference type="ChEBI" id="CHEBI:29105"/>
    </ligand>
</feature>
<feature type="binding site" evidence="1">
    <location>
        <position position="204"/>
    </location>
    <ligand>
        <name>Zn(2+)</name>
        <dbReference type="ChEBI" id="CHEBI:29105"/>
    </ligand>
</feature>
<feature type="binding site" evidence="1">
    <location>
        <position position="246"/>
    </location>
    <ligand>
        <name>Zn(2+)</name>
        <dbReference type="ChEBI" id="CHEBI:29105"/>
    </ligand>
</feature>
<comment type="function">
    <text evidence="1">Catalyzes the isomerization of 5-dehydro-4-deoxy-D-glucuronate to 3-deoxy-D-glycero-2,5-hexodiulosonate.</text>
</comment>
<comment type="catalytic activity">
    <reaction evidence="1">
        <text>5-dehydro-4-deoxy-D-glucuronate = 3-deoxy-D-glycero-2,5-hexodiulosonate</text>
        <dbReference type="Rhea" id="RHEA:23896"/>
        <dbReference type="ChEBI" id="CHEBI:17117"/>
        <dbReference type="ChEBI" id="CHEBI:29071"/>
        <dbReference type="EC" id="5.3.1.17"/>
    </reaction>
</comment>
<comment type="cofactor">
    <cofactor evidence="1">
        <name>Zn(2+)</name>
        <dbReference type="ChEBI" id="CHEBI:29105"/>
    </cofactor>
    <text evidence="1">Binds 1 zinc ion per subunit.</text>
</comment>
<comment type="pathway">
    <text evidence="1">Glycan metabolism; pectin degradation; 2-dehydro-3-deoxy-D-gluconate from pectin: step 4/5.</text>
</comment>
<comment type="similarity">
    <text evidence="1">Belongs to the KduI family.</text>
</comment>
<accession>A6W4E9</accession>
<reference key="1">
    <citation type="journal article" date="2008" name="PLoS ONE">
        <title>Survival in nuclear waste, extreme resistance, and potential applications gleaned from the genome sequence of Kineococcus radiotolerans SRS30216.</title>
        <authorList>
            <person name="Bagwell C.E."/>
            <person name="Bhat S."/>
            <person name="Hawkins G.M."/>
            <person name="Smith B.W."/>
            <person name="Biswas T."/>
            <person name="Hoover T.R."/>
            <person name="Saunders E."/>
            <person name="Han C.S."/>
            <person name="Tsodikov O.V."/>
            <person name="Shimkets L.J."/>
        </authorList>
    </citation>
    <scope>NUCLEOTIDE SEQUENCE [LARGE SCALE GENOMIC DNA]</scope>
    <source>
        <strain>ATCC BAA-149 / DSM 14245 / SRS30216</strain>
    </source>
</reference>